<accession>Q8CDD8</accession>
<accession>Q3TKH8</accession>
<accession>Q5U5Z7</accession>
<accession>Q9CSC4</accession>
<accession>Q9CWT1</accession>
<dbReference type="EMBL" id="AK010404">
    <property type="protein sequence ID" value="BAB26913.1"/>
    <property type="molecule type" value="mRNA"/>
</dbReference>
<dbReference type="EMBL" id="AK013254">
    <property type="protein sequence ID" value="BAB28748.2"/>
    <property type="molecule type" value="mRNA"/>
</dbReference>
<dbReference type="EMBL" id="AK030202">
    <property type="protein sequence ID" value="BAC26839.1"/>
    <property type="molecule type" value="mRNA"/>
</dbReference>
<dbReference type="EMBL" id="AK088807">
    <property type="protein sequence ID" value="BAC40584.1"/>
    <property type="molecule type" value="mRNA"/>
</dbReference>
<dbReference type="EMBL" id="AK166987">
    <property type="protein sequence ID" value="BAE39167.1"/>
    <property type="status" value="ALT_INIT"/>
    <property type="molecule type" value="mRNA"/>
</dbReference>
<dbReference type="EMBL" id="AK168440">
    <property type="protein sequence ID" value="BAE40345.1"/>
    <property type="molecule type" value="mRNA"/>
</dbReference>
<dbReference type="EMBL" id="BC036318">
    <property type="protein sequence ID" value="AAH36318.1"/>
    <property type="molecule type" value="mRNA"/>
</dbReference>
<dbReference type="EMBL" id="BC049250">
    <property type="protein sequence ID" value="AAH49250.1"/>
    <property type="molecule type" value="mRNA"/>
</dbReference>
<dbReference type="CCDS" id="CCDS28588.1">
    <molecule id="Q8CDD8-1"/>
</dbReference>
<dbReference type="CCDS" id="CCDS89045.1">
    <molecule id="Q8CDD8-2"/>
</dbReference>
<dbReference type="RefSeq" id="NP_001343227.2">
    <molecule id="Q8CDD8-2"/>
    <property type="nucleotide sequence ID" value="NM_001356298.2"/>
</dbReference>
<dbReference type="RefSeq" id="NP_001343228.1">
    <molecule id="Q8CDD8-2"/>
    <property type="nucleotide sequence ID" value="NM_001356299.2"/>
</dbReference>
<dbReference type="RefSeq" id="NP_001343229.1">
    <molecule id="Q8CDD8-1"/>
    <property type="nucleotide sequence ID" value="NM_001356300.2"/>
</dbReference>
<dbReference type="RefSeq" id="NP_080164.2">
    <molecule id="Q8CDD8-1"/>
    <property type="nucleotide sequence ID" value="NM_025888.7"/>
</dbReference>
<dbReference type="RefSeq" id="XP_006524873.1">
    <property type="nucleotide sequence ID" value="XM_006524810.1"/>
</dbReference>
<dbReference type="RefSeq" id="XP_006524874.1">
    <molecule id="Q8CDD8-1"/>
    <property type="nucleotide sequence ID" value="XM_006524811.1"/>
</dbReference>
<dbReference type="PDB" id="1FO0">
    <property type="method" value="X-ray"/>
    <property type="resolution" value="2.50 A"/>
    <property type="chains" value="P=207-214"/>
</dbReference>
<dbReference type="PDB" id="1NAN">
    <property type="method" value="X-ray"/>
    <property type="resolution" value="2.30 A"/>
    <property type="chains" value="M/Q=207-214"/>
</dbReference>
<dbReference type="PDB" id="2CLZ">
    <property type="method" value="X-ray"/>
    <property type="resolution" value="1.90 A"/>
    <property type="chains" value="C/M=207-214"/>
</dbReference>
<dbReference type="PDBsum" id="1FO0"/>
<dbReference type="PDBsum" id="1NAN"/>
<dbReference type="PDBsum" id="2CLZ"/>
<dbReference type="SMR" id="Q8CDD8"/>
<dbReference type="BioGRID" id="211857">
    <property type="interactions" value="6"/>
</dbReference>
<dbReference type="FunCoup" id="Q8CDD8">
    <property type="interactions" value="1692"/>
</dbReference>
<dbReference type="IntAct" id="Q8CDD8">
    <property type="interactions" value="1"/>
</dbReference>
<dbReference type="MINT" id="Q8CDD8"/>
<dbReference type="STRING" id="10090.ENSMUSP00000156936"/>
<dbReference type="iPTMnet" id="Q8CDD8"/>
<dbReference type="PhosphoSitePlus" id="Q8CDD8"/>
<dbReference type="PaxDb" id="10090-ENSMUSP00000062282"/>
<dbReference type="ProteomicsDB" id="263488">
    <molecule id="Q8CDD8-1"/>
</dbReference>
<dbReference type="ProteomicsDB" id="263489">
    <molecule id="Q8CDD8-2"/>
</dbReference>
<dbReference type="Antibodypedia" id="29679">
    <property type="antibodies" value="52 antibodies from 16 providers"/>
</dbReference>
<dbReference type="DNASU" id="66989"/>
<dbReference type="Ensembl" id="ENSMUST00000117672.9">
    <molecule id="Q8CDD8-2"/>
    <property type="protein sequence ID" value="ENSMUSP00000113740.2"/>
    <property type="gene ID" value="ENSMUSG00000005936.20"/>
</dbReference>
<dbReference type="Ensembl" id="ENSMUST00000118762.9">
    <molecule id="Q8CDD8-2"/>
    <property type="protein sequence ID" value="ENSMUSP00000112890.2"/>
    <property type="gene ID" value="ENSMUSG00000005936.20"/>
</dbReference>
<dbReference type="Ensembl" id="ENSMUST00000168507.2">
    <molecule id="Q8CDD8-1"/>
    <property type="protein sequence ID" value="ENSMUSP00000131435.2"/>
    <property type="gene ID" value="ENSMUSG00000005936.20"/>
</dbReference>
<dbReference type="Ensembl" id="ENSMUST00000233197.2">
    <molecule id="Q8CDD8-1"/>
    <property type="protein sequence ID" value="ENSMUSP00000156936.2"/>
    <property type="gene ID" value="ENSMUSG00000005936.20"/>
</dbReference>
<dbReference type="GeneID" id="66989"/>
<dbReference type="KEGG" id="mmu:66989"/>
<dbReference type="UCSC" id="uc008brw.1">
    <molecule id="Q8CDD8-1"/>
    <property type="organism name" value="mouse"/>
</dbReference>
<dbReference type="AGR" id="MGI:1914239"/>
<dbReference type="CTD" id="222658"/>
<dbReference type="MGI" id="MGI:1914239">
    <property type="gene designation" value="Kctd20"/>
</dbReference>
<dbReference type="VEuPathDB" id="HostDB:ENSMUSG00000005936"/>
<dbReference type="eggNOG" id="KOG3840">
    <property type="taxonomic scope" value="Eukaryota"/>
</dbReference>
<dbReference type="GeneTree" id="ENSGT00390000007975"/>
<dbReference type="HOGENOM" id="CLU_036245_0_0_1"/>
<dbReference type="InParanoid" id="Q8CDD8"/>
<dbReference type="OMA" id="WNHEPFI"/>
<dbReference type="OrthoDB" id="10034757at2759"/>
<dbReference type="PhylomeDB" id="Q8CDD8"/>
<dbReference type="TreeFam" id="TF314369"/>
<dbReference type="BioGRID-ORCS" id="66989">
    <property type="hits" value="1 hit in 77 CRISPR screens"/>
</dbReference>
<dbReference type="ChiTaRS" id="Kctd20">
    <property type="organism name" value="mouse"/>
</dbReference>
<dbReference type="EvolutionaryTrace" id="Q8CDD8"/>
<dbReference type="PRO" id="PR:Q8CDD8"/>
<dbReference type="Proteomes" id="UP000000589">
    <property type="component" value="Chromosome 17"/>
</dbReference>
<dbReference type="RNAct" id="Q8CDD8">
    <property type="molecule type" value="protein"/>
</dbReference>
<dbReference type="Bgee" id="ENSMUSG00000005936">
    <property type="expression patterns" value="Expressed in granulocyte and 272 other cell types or tissues"/>
</dbReference>
<dbReference type="ExpressionAtlas" id="Q8CDD8">
    <property type="expression patterns" value="baseline and differential"/>
</dbReference>
<dbReference type="GO" id="GO:0005737">
    <property type="term" value="C:cytoplasm"/>
    <property type="evidence" value="ECO:0000314"/>
    <property type="project" value="UniProtKB"/>
</dbReference>
<dbReference type="GO" id="GO:0042802">
    <property type="term" value="F:identical protein binding"/>
    <property type="evidence" value="ECO:0000353"/>
    <property type="project" value="MGI"/>
</dbReference>
<dbReference type="GO" id="GO:0042327">
    <property type="term" value="P:positive regulation of phosphorylation"/>
    <property type="evidence" value="ECO:0000314"/>
    <property type="project" value="UniProtKB"/>
</dbReference>
<dbReference type="CDD" id="cd18386">
    <property type="entry name" value="BTB_POZ_KCTD20"/>
    <property type="match status" value="1"/>
</dbReference>
<dbReference type="FunFam" id="3.30.710.10:FF:000017">
    <property type="entry name" value="BTB/POZ domain-containing protein 10 isoform X1"/>
    <property type="match status" value="1"/>
</dbReference>
<dbReference type="Gene3D" id="3.30.710.10">
    <property type="entry name" value="Potassium Channel Kv1.1, Chain A"/>
    <property type="match status" value="1"/>
</dbReference>
<dbReference type="InterPro" id="IPR000210">
    <property type="entry name" value="BTB/POZ_dom"/>
</dbReference>
<dbReference type="InterPro" id="IPR039886">
    <property type="entry name" value="BTBD10/KCTD20"/>
</dbReference>
<dbReference type="InterPro" id="IPR039885">
    <property type="entry name" value="BTBD10/KCTD20_BTB/POZ"/>
</dbReference>
<dbReference type="InterPro" id="IPR011333">
    <property type="entry name" value="SKP1/BTB/POZ_sf"/>
</dbReference>
<dbReference type="PANTHER" id="PTHR21637">
    <property type="entry name" value="BTB/POZ DOMAIN-CONTAINING PROTEIN 10-RELATED"/>
    <property type="match status" value="1"/>
</dbReference>
<dbReference type="PANTHER" id="PTHR21637:SF1">
    <property type="entry name" value="BTB_POZ DOMAIN-CONTAINING PROTEIN KCTD20"/>
    <property type="match status" value="1"/>
</dbReference>
<dbReference type="Pfam" id="PF16017">
    <property type="entry name" value="BTB_3"/>
    <property type="match status" value="1"/>
</dbReference>
<dbReference type="SMART" id="SM00225">
    <property type="entry name" value="BTB"/>
    <property type="match status" value="1"/>
</dbReference>
<dbReference type="SUPFAM" id="SSF54695">
    <property type="entry name" value="POZ domain"/>
    <property type="match status" value="1"/>
</dbReference>
<evidence type="ECO:0000250" key="1">
    <source>
        <dbReference type="UniProtKB" id="Q7Z5Y7"/>
    </source>
</evidence>
<evidence type="ECO:0000269" key="2">
    <source>
    </source>
</evidence>
<evidence type="ECO:0000303" key="3">
    <source>
    </source>
</evidence>
<evidence type="ECO:0000303" key="4">
    <source>
    </source>
</evidence>
<evidence type="ECO:0000305" key="5"/>
<feature type="chain" id="PRO_0000255249" description="BTB/POZ domain-containing protein KCTD20">
    <location>
        <begin position="1"/>
        <end position="419"/>
    </location>
</feature>
<feature type="domain" description="BTB">
    <location>
        <begin position="117"/>
        <end position="191"/>
    </location>
</feature>
<feature type="splice variant" id="VSP_021279" description="In isoform 2." evidence="3 4">
    <location>
        <begin position="1"/>
        <end position="71"/>
    </location>
</feature>
<keyword id="KW-0002">3D-structure</keyword>
<keyword id="KW-0025">Alternative splicing</keyword>
<keyword id="KW-0963">Cytoplasm</keyword>
<keyword id="KW-1185">Reference proteome</keyword>
<organism>
    <name type="scientific">Mus musculus</name>
    <name type="common">Mouse</name>
    <dbReference type="NCBI Taxonomy" id="10090"/>
    <lineage>
        <taxon>Eukaryota</taxon>
        <taxon>Metazoa</taxon>
        <taxon>Chordata</taxon>
        <taxon>Craniata</taxon>
        <taxon>Vertebrata</taxon>
        <taxon>Euteleostomi</taxon>
        <taxon>Mammalia</taxon>
        <taxon>Eutheria</taxon>
        <taxon>Euarchontoglires</taxon>
        <taxon>Glires</taxon>
        <taxon>Rodentia</taxon>
        <taxon>Myomorpha</taxon>
        <taxon>Muroidea</taxon>
        <taxon>Muridae</taxon>
        <taxon>Murinae</taxon>
        <taxon>Mus</taxon>
        <taxon>Mus</taxon>
    </lineage>
</organism>
<sequence>MNVHQGSDGDWSLQPELSCLGDEALAATQEKEGSSLVSSGLHSVTYPLAARSEDLALDYASQPASLPHPHIMPLPEDNKGSCFQSGSKRSHEPFIVPERFGNSGLGFGGGAHSQAPEKVTLLVDGTRFVVNPQIFTAHPDTMLGRMFGPGREYNFTRPNEKGEYVIAEGISATVFRTVLDYYKTGIINCPDGISIPDLRDTCDYLCINFDFNTIRCQDLSALLHELSNDGAHKQFDHYLEELILPIMVGCAKKGERECHIVVLTDEDSVDWDEDHPPPMGEEYSQILYSSKLYRFFKYIENRDVAKTVLKERGLKNIRIGIEGYPTCKEKIKRRPGGRSEVIYNYVQRPFIQMSWEKEEGKSRHVDFQCVRSKSLTNLVAAGEDVLEDQEIIMHHPPQVDELDRLNAPLSQMAPNDFQD</sequence>
<proteinExistence type="evidence at protein level"/>
<protein>
    <recommendedName>
        <fullName>BTB/POZ domain-containing protein KCTD20</fullName>
    </recommendedName>
    <alternativeName>
        <fullName>Potassium channel tetramerization domain containing 20</fullName>
    </alternativeName>
</protein>
<name>KCD20_MOUSE</name>
<reference key="1">
    <citation type="journal article" date="2005" name="Science">
        <title>The transcriptional landscape of the mammalian genome.</title>
        <authorList>
            <person name="Carninci P."/>
            <person name="Kasukawa T."/>
            <person name="Katayama S."/>
            <person name="Gough J."/>
            <person name="Frith M.C."/>
            <person name="Maeda N."/>
            <person name="Oyama R."/>
            <person name="Ravasi T."/>
            <person name="Lenhard B."/>
            <person name="Wells C."/>
            <person name="Kodzius R."/>
            <person name="Shimokawa K."/>
            <person name="Bajic V.B."/>
            <person name="Brenner S.E."/>
            <person name="Batalov S."/>
            <person name="Forrest A.R."/>
            <person name="Zavolan M."/>
            <person name="Davis M.J."/>
            <person name="Wilming L.G."/>
            <person name="Aidinis V."/>
            <person name="Allen J.E."/>
            <person name="Ambesi-Impiombato A."/>
            <person name="Apweiler R."/>
            <person name="Aturaliya R.N."/>
            <person name="Bailey T.L."/>
            <person name="Bansal M."/>
            <person name="Baxter L."/>
            <person name="Beisel K.W."/>
            <person name="Bersano T."/>
            <person name="Bono H."/>
            <person name="Chalk A.M."/>
            <person name="Chiu K.P."/>
            <person name="Choudhary V."/>
            <person name="Christoffels A."/>
            <person name="Clutterbuck D.R."/>
            <person name="Crowe M.L."/>
            <person name="Dalla E."/>
            <person name="Dalrymple B.P."/>
            <person name="de Bono B."/>
            <person name="Della Gatta G."/>
            <person name="di Bernardo D."/>
            <person name="Down T."/>
            <person name="Engstrom P."/>
            <person name="Fagiolini M."/>
            <person name="Faulkner G."/>
            <person name="Fletcher C.F."/>
            <person name="Fukushima T."/>
            <person name="Furuno M."/>
            <person name="Futaki S."/>
            <person name="Gariboldi M."/>
            <person name="Georgii-Hemming P."/>
            <person name="Gingeras T.R."/>
            <person name="Gojobori T."/>
            <person name="Green R.E."/>
            <person name="Gustincich S."/>
            <person name="Harbers M."/>
            <person name="Hayashi Y."/>
            <person name="Hensch T.K."/>
            <person name="Hirokawa N."/>
            <person name="Hill D."/>
            <person name="Huminiecki L."/>
            <person name="Iacono M."/>
            <person name="Ikeo K."/>
            <person name="Iwama A."/>
            <person name="Ishikawa T."/>
            <person name="Jakt M."/>
            <person name="Kanapin A."/>
            <person name="Katoh M."/>
            <person name="Kawasawa Y."/>
            <person name="Kelso J."/>
            <person name="Kitamura H."/>
            <person name="Kitano H."/>
            <person name="Kollias G."/>
            <person name="Krishnan S.P."/>
            <person name="Kruger A."/>
            <person name="Kummerfeld S.K."/>
            <person name="Kurochkin I.V."/>
            <person name="Lareau L.F."/>
            <person name="Lazarevic D."/>
            <person name="Lipovich L."/>
            <person name="Liu J."/>
            <person name="Liuni S."/>
            <person name="McWilliam S."/>
            <person name="Madan Babu M."/>
            <person name="Madera M."/>
            <person name="Marchionni L."/>
            <person name="Matsuda H."/>
            <person name="Matsuzawa S."/>
            <person name="Miki H."/>
            <person name="Mignone F."/>
            <person name="Miyake S."/>
            <person name="Morris K."/>
            <person name="Mottagui-Tabar S."/>
            <person name="Mulder N."/>
            <person name="Nakano N."/>
            <person name="Nakauchi H."/>
            <person name="Ng P."/>
            <person name="Nilsson R."/>
            <person name="Nishiguchi S."/>
            <person name="Nishikawa S."/>
            <person name="Nori F."/>
            <person name="Ohara O."/>
            <person name="Okazaki Y."/>
            <person name="Orlando V."/>
            <person name="Pang K.C."/>
            <person name="Pavan W.J."/>
            <person name="Pavesi G."/>
            <person name="Pesole G."/>
            <person name="Petrovsky N."/>
            <person name="Piazza S."/>
            <person name="Reed J."/>
            <person name="Reid J.F."/>
            <person name="Ring B.Z."/>
            <person name="Ringwald M."/>
            <person name="Rost B."/>
            <person name="Ruan Y."/>
            <person name="Salzberg S.L."/>
            <person name="Sandelin A."/>
            <person name="Schneider C."/>
            <person name="Schoenbach C."/>
            <person name="Sekiguchi K."/>
            <person name="Semple C.A."/>
            <person name="Seno S."/>
            <person name="Sessa L."/>
            <person name="Sheng Y."/>
            <person name="Shibata Y."/>
            <person name="Shimada H."/>
            <person name="Shimada K."/>
            <person name="Silva D."/>
            <person name="Sinclair B."/>
            <person name="Sperling S."/>
            <person name="Stupka E."/>
            <person name="Sugiura K."/>
            <person name="Sultana R."/>
            <person name="Takenaka Y."/>
            <person name="Taki K."/>
            <person name="Tammoja K."/>
            <person name="Tan S.L."/>
            <person name="Tang S."/>
            <person name="Taylor M.S."/>
            <person name="Tegner J."/>
            <person name="Teichmann S.A."/>
            <person name="Ueda H.R."/>
            <person name="van Nimwegen E."/>
            <person name="Verardo R."/>
            <person name="Wei C.L."/>
            <person name="Yagi K."/>
            <person name="Yamanishi H."/>
            <person name="Zabarovsky E."/>
            <person name="Zhu S."/>
            <person name="Zimmer A."/>
            <person name="Hide W."/>
            <person name="Bult C."/>
            <person name="Grimmond S.M."/>
            <person name="Teasdale R.D."/>
            <person name="Liu E.T."/>
            <person name="Brusic V."/>
            <person name="Quackenbush J."/>
            <person name="Wahlestedt C."/>
            <person name="Mattick J.S."/>
            <person name="Hume D.A."/>
            <person name="Kai C."/>
            <person name="Sasaki D."/>
            <person name="Tomaru Y."/>
            <person name="Fukuda S."/>
            <person name="Kanamori-Katayama M."/>
            <person name="Suzuki M."/>
            <person name="Aoki J."/>
            <person name="Arakawa T."/>
            <person name="Iida J."/>
            <person name="Imamura K."/>
            <person name="Itoh M."/>
            <person name="Kato T."/>
            <person name="Kawaji H."/>
            <person name="Kawagashira N."/>
            <person name="Kawashima T."/>
            <person name="Kojima M."/>
            <person name="Kondo S."/>
            <person name="Konno H."/>
            <person name="Nakano K."/>
            <person name="Ninomiya N."/>
            <person name="Nishio T."/>
            <person name="Okada M."/>
            <person name="Plessy C."/>
            <person name="Shibata K."/>
            <person name="Shiraki T."/>
            <person name="Suzuki S."/>
            <person name="Tagami M."/>
            <person name="Waki K."/>
            <person name="Watahiki A."/>
            <person name="Okamura-Oho Y."/>
            <person name="Suzuki H."/>
            <person name="Kawai J."/>
            <person name="Hayashizaki Y."/>
        </authorList>
    </citation>
    <scope>NUCLEOTIDE SEQUENCE [LARGE SCALE MRNA] (ISOFORMS 1 AND 2)</scope>
    <source>
        <strain>C57BL/6J</strain>
        <strain>NOD</strain>
        <tissue>Blastocyst</tissue>
        <tissue>Embryo</tissue>
        <tissue>Liver</tissue>
        <tissue>Testis</tissue>
        <tissue>Thymus</tissue>
    </source>
</reference>
<reference key="2">
    <citation type="journal article" date="2004" name="Genome Res.">
        <title>The status, quality, and expansion of the NIH full-length cDNA project: the Mammalian Gene Collection (MGC).</title>
        <authorList>
            <consortium name="The MGC Project Team"/>
        </authorList>
    </citation>
    <scope>NUCLEOTIDE SEQUENCE [LARGE SCALE MRNA] (ISOFORM 2)</scope>
    <scope>NUCLEOTIDE SEQUENCE [LARGE SCALE MRNA] OF 71-419 (ISOFORM 1)</scope>
    <source>
        <strain>FVB/N</strain>
        <tissue>Eye</tissue>
        <tissue>Kidney</tissue>
    </source>
</reference>
<reference key="3">
    <citation type="journal article" date="2010" name="Cell">
        <title>A tissue-specific atlas of mouse protein phosphorylation and expression.</title>
        <authorList>
            <person name="Huttlin E.L."/>
            <person name="Jedrychowski M.P."/>
            <person name="Elias J.E."/>
            <person name="Goswami T."/>
            <person name="Rad R."/>
            <person name="Beausoleil S.A."/>
            <person name="Villen J."/>
            <person name="Haas W."/>
            <person name="Sowa M.E."/>
            <person name="Gygi S.P."/>
        </authorList>
    </citation>
    <scope>IDENTIFICATION BY MASS SPECTROMETRY [LARGE SCALE ANALYSIS]</scope>
    <source>
        <tissue>Spleen</tissue>
    </source>
</reference>
<reference key="4">
    <citation type="journal article" date="2013" name="BMC Biochem.">
        <title>KCTD20, a relative of BTBD10, is a positive regulator of Akt.</title>
        <authorList>
            <person name="Nawa M."/>
            <person name="Matsuoka M."/>
        </authorList>
    </citation>
    <scope>TISSUE SPECIFICITY</scope>
    <scope>SUBCELLULAR LOCATION</scope>
    <scope>INTERACTION WITH AKT1; AKT2; AKT3; PPP1CA AND PP2CA</scope>
    <scope>FUNCTION</scope>
</reference>
<gene>
    <name type="primary">Kctd20</name>
</gene>
<comment type="function">
    <text evidence="2">Promotes the phosphorylation of AKT family members.</text>
</comment>
<comment type="subunit">
    <text evidence="1 2">Interacts with AKT1; AKT2 and AKT3 (PubMed:24156551). Interacts with PPP2CA and PPP1CA (PubMed:24156551). Part of a complex containing MARK4 (By similarity).</text>
</comment>
<comment type="subcellular location">
    <subcellularLocation>
        <location evidence="2">Cytoplasm</location>
    </subcellularLocation>
    <text evidence="2">Colocalizes with BTBD10 in filamentous structures.</text>
</comment>
<comment type="alternative products">
    <event type="alternative splicing"/>
    <isoform>
        <id>Q8CDD8-1</id>
        <name>1</name>
        <sequence type="displayed"/>
    </isoform>
    <isoform>
        <id>Q8CDD8-2</id>
        <name>2</name>
        <sequence type="described" ref="VSP_021279"/>
    </isoform>
</comment>
<comment type="tissue specificity">
    <text evidence="2">Ubiquitously expressed.</text>
</comment>
<comment type="sequence caution" evidence="5">
    <conflict type="erroneous initiation">
        <sequence resource="EMBL-CDS" id="BAE39167"/>
    </conflict>
</comment>